<name>VG85_GAHVM</name>
<gene>
    <name type="primary">MDV085</name>
    <name type="synonym">MDV099</name>
</gene>
<protein>
    <recommendedName>
        <fullName>Uncharacterized gene 85 protein</fullName>
    </recommendedName>
</protein>
<proteinExistence type="predicted"/>
<organismHost>
    <name type="scientific">Gallus gallus</name>
    <name type="common">Chicken</name>
    <dbReference type="NCBI Taxonomy" id="9031"/>
</organismHost>
<sequence length="132" mass="14756">MFAYRALVGWAPQSLIYFTTLLVDDKSLLCLVDGIQVFVYWAWPSQTMQSFSRTQFDSVGRSSLCARNAMLAFKLFEVHRRGYKPDTALCNWGGGGSRTLAATSISGSNQIRITMLWSGPGIGAWPKYKTRC</sequence>
<reference key="1">
    <citation type="journal article" date="2000" name="J. Virol.">
        <title>The genome of a very virulent Marek's disease virus.</title>
        <authorList>
            <person name="Tulman E.R."/>
            <person name="Afonso C.L."/>
            <person name="Lu Z."/>
            <person name="Zsak L."/>
            <person name="Rock D.L."/>
            <person name="Kutish G.F."/>
        </authorList>
    </citation>
    <scope>NUCLEOTIDE SEQUENCE [LARGE SCALE GENOMIC DNA]</scope>
</reference>
<organism>
    <name type="scientific">Gallid herpesvirus 2 (strain Chicken/Md5/ATCC VR-987)</name>
    <name type="common">GaHV-2</name>
    <name type="synonym">Marek's disease herpesvirus type 1</name>
    <dbReference type="NCBI Taxonomy" id="10389"/>
    <lineage>
        <taxon>Viruses</taxon>
        <taxon>Duplodnaviria</taxon>
        <taxon>Heunggongvirae</taxon>
        <taxon>Peploviricota</taxon>
        <taxon>Herviviricetes</taxon>
        <taxon>Herpesvirales</taxon>
        <taxon>Orthoherpesviridae</taxon>
        <taxon>Alphaherpesvirinae</taxon>
        <taxon>Mardivirus</taxon>
        <taxon>Mardivirus gallidalpha2</taxon>
        <taxon>Gallid alphaherpesvirus 2</taxon>
    </lineage>
</organism>
<feature type="chain" id="PRO_0000406537" description="Uncharacterized gene 85 protein">
    <location>
        <begin position="1"/>
        <end position="132"/>
    </location>
</feature>
<accession>Q9DH17</accession>
<keyword id="KW-1185">Reference proteome</keyword>
<dbReference type="EMBL" id="AF243438">
    <property type="protein sequence ID" value="AAG14272.1"/>
    <property type="molecule type" value="Genomic_DNA"/>
</dbReference>
<dbReference type="EMBL" id="AF243438">
    <property type="protein sequence ID" value="AAG14283.1"/>
    <property type="molecule type" value="Genomic_DNA"/>
</dbReference>
<dbReference type="Proteomes" id="UP000008072">
    <property type="component" value="Segment"/>
</dbReference>